<feature type="chain" id="PRO_0000273858" description="Large ribosomal subunit protein uL30">
    <location>
        <begin position="1"/>
        <end position="62"/>
    </location>
</feature>
<name>RL30_RUEPO</name>
<gene>
    <name evidence="1" type="primary">rpmD</name>
    <name type="ordered locus">SPO0503</name>
</gene>
<dbReference type="EMBL" id="CP000031">
    <property type="protein sequence ID" value="AAV93820.1"/>
    <property type="molecule type" value="Genomic_DNA"/>
</dbReference>
<dbReference type="RefSeq" id="WP_011046262.1">
    <property type="nucleotide sequence ID" value="NC_003911.12"/>
</dbReference>
<dbReference type="SMR" id="Q5LW40"/>
<dbReference type="STRING" id="246200.SPO0503"/>
<dbReference type="PaxDb" id="246200-SPO0503"/>
<dbReference type="KEGG" id="sil:SPO0503"/>
<dbReference type="eggNOG" id="COG1841">
    <property type="taxonomic scope" value="Bacteria"/>
</dbReference>
<dbReference type="HOGENOM" id="CLU_131047_1_2_5"/>
<dbReference type="OrthoDB" id="9812790at2"/>
<dbReference type="Proteomes" id="UP000001023">
    <property type="component" value="Chromosome"/>
</dbReference>
<dbReference type="GO" id="GO:0022625">
    <property type="term" value="C:cytosolic large ribosomal subunit"/>
    <property type="evidence" value="ECO:0007669"/>
    <property type="project" value="TreeGrafter"/>
</dbReference>
<dbReference type="GO" id="GO:0003735">
    <property type="term" value="F:structural constituent of ribosome"/>
    <property type="evidence" value="ECO:0007669"/>
    <property type="project" value="InterPro"/>
</dbReference>
<dbReference type="GO" id="GO:0006412">
    <property type="term" value="P:translation"/>
    <property type="evidence" value="ECO:0007669"/>
    <property type="project" value="UniProtKB-UniRule"/>
</dbReference>
<dbReference type="CDD" id="cd01658">
    <property type="entry name" value="Ribosomal_L30"/>
    <property type="match status" value="1"/>
</dbReference>
<dbReference type="Gene3D" id="3.30.1390.20">
    <property type="entry name" value="Ribosomal protein L30, ferredoxin-like fold domain"/>
    <property type="match status" value="1"/>
</dbReference>
<dbReference type="HAMAP" id="MF_01371_B">
    <property type="entry name" value="Ribosomal_uL30_B"/>
    <property type="match status" value="1"/>
</dbReference>
<dbReference type="InterPro" id="IPR036919">
    <property type="entry name" value="Ribo_uL30_ferredoxin-like_sf"/>
</dbReference>
<dbReference type="InterPro" id="IPR005996">
    <property type="entry name" value="Ribosomal_uL30_bac-type"/>
</dbReference>
<dbReference type="InterPro" id="IPR016082">
    <property type="entry name" value="Ribosomal_uL30_ferredoxin-like"/>
</dbReference>
<dbReference type="NCBIfam" id="TIGR01308">
    <property type="entry name" value="rpmD_bact"/>
    <property type="match status" value="1"/>
</dbReference>
<dbReference type="PANTHER" id="PTHR15892:SF2">
    <property type="entry name" value="LARGE RIBOSOMAL SUBUNIT PROTEIN UL30M"/>
    <property type="match status" value="1"/>
</dbReference>
<dbReference type="PANTHER" id="PTHR15892">
    <property type="entry name" value="MITOCHONDRIAL RIBOSOMAL PROTEIN L30"/>
    <property type="match status" value="1"/>
</dbReference>
<dbReference type="Pfam" id="PF00327">
    <property type="entry name" value="Ribosomal_L30"/>
    <property type="match status" value="1"/>
</dbReference>
<dbReference type="PIRSF" id="PIRSF002211">
    <property type="entry name" value="Ribosomal_L30_bac-type"/>
    <property type="match status" value="1"/>
</dbReference>
<dbReference type="SUPFAM" id="SSF55129">
    <property type="entry name" value="Ribosomal protein L30p/L7e"/>
    <property type="match status" value="1"/>
</dbReference>
<evidence type="ECO:0000255" key="1">
    <source>
        <dbReference type="HAMAP-Rule" id="MF_01371"/>
    </source>
</evidence>
<evidence type="ECO:0000305" key="2"/>
<reference key="1">
    <citation type="journal article" date="2004" name="Nature">
        <title>Genome sequence of Silicibacter pomeroyi reveals adaptations to the marine environment.</title>
        <authorList>
            <person name="Moran M.A."/>
            <person name="Buchan A."/>
            <person name="Gonzalez J.M."/>
            <person name="Heidelberg J.F."/>
            <person name="Whitman W.B."/>
            <person name="Kiene R.P."/>
            <person name="Henriksen J.R."/>
            <person name="King G.M."/>
            <person name="Belas R."/>
            <person name="Fuqua C."/>
            <person name="Brinkac L.M."/>
            <person name="Lewis M."/>
            <person name="Johri S."/>
            <person name="Weaver B."/>
            <person name="Pai G."/>
            <person name="Eisen J.A."/>
            <person name="Rahe E."/>
            <person name="Sheldon W.M."/>
            <person name="Ye W."/>
            <person name="Miller T.R."/>
            <person name="Carlton J."/>
            <person name="Rasko D.A."/>
            <person name="Paulsen I.T."/>
            <person name="Ren Q."/>
            <person name="Daugherty S.C."/>
            <person name="DeBoy R.T."/>
            <person name="Dodson R.J."/>
            <person name="Durkin A.S."/>
            <person name="Madupu R."/>
            <person name="Nelson W.C."/>
            <person name="Sullivan S.A."/>
            <person name="Rosovitz M.J."/>
            <person name="Haft D.H."/>
            <person name="Selengut J."/>
            <person name="Ward N."/>
        </authorList>
    </citation>
    <scope>NUCLEOTIDE SEQUENCE [LARGE SCALE GENOMIC DNA]</scope>
    <source>
        <strain>ATCC 700808 / DSM 15171 / DSS-3</strain>
    </source>
</reference>
<reference key="2">
    <citation type="journal article" date="2014" name="Stand. Genomic Sci.">
        <title>An updated genome annotation for the model marine bacterium Ruegeria pomeroyi DSS-3.</title>
        <authorList>
            <person name="Rivers A.R."/>
            <person name="Smith C.B."/>
            <person name="Moran M.A."/>
        </authorList>
    </citation>
    <scope>GENOME REANNOTATION</scope>
    <source>
        <strain>ATCC 700808 / DSM 15171 / DSS-3</strain>
    </source>
</reference>
<proteinExistence type="inferred from homology"/>
<organism>
    <name type="scientific">Ruegeria pomeroyi (strain ATCC 700808 / DSM 15171 / DSS-3)</name>
    <name type="common">Silicibacter pomeroyi</name>
    <dbReference type="NCBI Taxonomy" id="246200"/>
    <lineage>
        <taxon>Bacteria</taxon>
        <taxon>Pseudomonadati</taxon>
        <taxon>Pseudomonadota</taxon>
        <taxon>Alphaproteobacteria</taxon>
        <taxon>Rhodobacterales</taxon>
        <taxon>Roseobacteraceae</taxon>
        <taxon>Ruegeria</taxon>
    </lineage>
</organism>
<keyword id="KW-1185">Reference proteome</keyword>
<keyword id="KW-0687">Ribonucleoprotein</keyword>
<keyword id="KW-0689">Ribosomal protein</keyword>
<sequence>MAKTIVVKQIGSPIRRPADQRATLVGLGLNKMHKTRELEDTPSVRGMIRKIPHLVEIIEERG</sequence>
<comment type="subunit">
    <text evidence="1">Part of the 50S ribosomal subunit.</text>
</comment>
<comment type="similarity">
    <text evidence="1">Belongs to the universal ribosomal protein uL30 family.</text>
</comment>
<accession>Q5LW40</accession>
<protein>
    <recommendedName>
        <fullName evidence="1">Large ribosomal subunit protein uL30</fullName>
    </recommendedName>
    <alternativeName>
        <fullName evidence="2">50S ribosomal protein L30</fullName>
    </alternativeName>
</protein>